<dbReference type="EMBL" id="AM269987">
    <property type="protein sequence ID" value="CAK96193.1"/>
    <property type="molecule type" value="Genomic_DNA"/>
</dbReference>
<dbReference type="EnsemblFungi" id="CAK96193">
    <property type="protein sequence ID" value="CAK96193"/>
    <property type="gene ID" value="An01g13230"/>
</dbReference>
<dbReference type="HOGENOM" id="CLU_022511_2_0_1"/>
<dbReference type="Proteomes" id="UP000006706">
    <property type="component" value="Chromosome 2R"/>
</dbReference>
<dbReference type="GO" id="GO:0005739">
    <property type="term" value="C:mitochondrion"/>
    <property type="evidence" value="ECO:0007669"/>
    <property type="project" value="UniProtKB-SubCell"/>
</dbReference>
<dbReference type="GO" id="GO:0007005">
    <property type="term" value="P:mitochondrion organization"/>
    <property type="evidence" value="ECO:0007669"/>
    <property type="project" value="InterPro"/>
</dbReference>
<dbReference type="CDD" id="cd06060">
    <property type="entry name" value="misato"/>
    <property type="match status" value="1"/>
</dbReference>
<dbReference type="Gene3D" id="3.40.50.1440">
    <property type="entry name" value="Tubulin/FtsZ, GTPase domain"/>
    <property type="match status" value="1"/>
</dbReference>
<dbReference type="InterPro" id="IPR049942">
    <property type="entry name" value="DML1/Misato"/>
</dbReference>
<dbReference type="InterPro" id="IPR029209">
    <property type="entry name" value="DML1/Misato_tubulin"/>
</dbReference>
<dbReference type="InterPro" id="IPR019605">
    <property type="entry name" value="Misato_II_tubulin-like"/>
</dbReference>
<dbReference type="InterPro" id="IPR036525">
    <property type="entry name" value="Tubulin/FtsZ_GTPase_sf"/>
</dbReference>
<dbReference type="PANTHER" id="PTHR13391">
    <property type="entry name" value="MITOCHONDRIAL DISTRIBUTION REGULATOR MISATO"/>
    <property type="match status" value="1"/>
</dbReference>
<dbReference type="PANTHER" id="PTHR13391:SF0">
    <property type="entry name" value="PROTEIN MISATO HOMOLOG 1"/>
    <property type="match status" value="1"/>
</dbReference>
<dbReference type="Pfam" id="PF10644">
    <property type="entry name" value="Misat_Tub_SegII"/>
    <property type="match status" value="1"/>
</dbReference>
<dbReference type="Pfam" id="PF14881">
    <property type="entry name" value="Tubulin_3"/>
    <property type="match status" value="1"/>
</dbReference>
<dbReference type="SUPFAM" id="SSF52490">
    <property type="entry name" value="Tubulin nucleotide-binding domain-like"/>
    <property type="match status" value="1"/>
</dbReference>
<proteinExistence type="inferred from homology"/>
<evidence type="ECO:0000250" key="1"/>
<evidence type="ECO:0000305" key="2"/>
<keyword id="KW-0496">Mitochondrion</keyword>
<keyword id="KW-1185">Reference proteome</keyword>
<accession>A2QAY5</accession>
<feature type="chain" id="PRO_0000285329" description="Protein dml1">
    <location>
        <begin position="1"/>
        <end position="487"/>
    </location>
</feature>
<protein>
    <recommendedName>
        <fullName>Protein dml1</fullName>
    </recommendedName>
</protein>
<organism>
    <name type="scientific">Aspergillus niger (strain ATCC MYA-4892 / CBS 513.88 / FGSC A1513)</name>
    <dbReference type="NCBI Taxonomy" id="425011"/>
    <lineage>
        <taxon>Eukaryota</taxon>
        <taxon>Fungi</taxon>
        <taxon>Dikarya</taxon>
        <taxon>Ascomycota</taxon>
        <taxon>Pezizomycotina</taxon>
        <taxon>Eurotiomycetes</taxon>
        <taxon>Eurotiomycetidae</taxon>
        <taxon>Eurotiales</taxon>
        <taxon>Aspergillaceae</taxon>
        <taxon>Aspergillus</taxon>
        <taxon>Aspergillus subgen. Circumdati</taxon>
    </lineage>
</organism>
<reference key="1">
    <citation type="journal article" date="2007" name="Nat. Biotechnol.">
        <title>Genome sequencing and analysis of the versatile cell factory Aspergillus niger CBS 513.88.</title>
        <authorList>
            <person name="Pel H.J."/>
            <person name="de Winde J.H."/>
            <person name="Archer D.B."/>
            <person name="Dyer P.S."/>
            <person name="Hofmann G."/>
            <person name="Schaap P.J."/>
            <person name="Turner G."/>
            <person name="de Vries R.P."/>
            <person name="Albang R."/>
            <person name="Albermann K."/>
            <person name="Andersen M.R."/>
            <person name="Bendtsen J.D."/>
            <person name="Benen J.A.E."/>
            <person name="van den Berg M."/>
            <person name="Breestraat S."/>
            <person name="Caddick M.X."/>
            <person name="Contreras R."/>
            <person name="Cornell M."/>
            <person name="Coutinho P.M."/>
            <person name="Danchin E.G.J."/>
            <person name="Debets A.J.M."/>
            <person name="Dekker P."/>
            <person name="van Dijck P.W.M."/>
            <person name="van Dijk A."/>
            <person name="Dijkhuizen L."/>
            <person name="Driessen A.J.M."/>
            <person name="d'Enfert C."/>
            <person name="Geysens S."/>
            <person name="Goosen C."/>
            <person name="Groot G.S.P."/>
            <person name="de Groot P.W.J."/>
            <person name="Guillemette T."/>
            <person name="Henrissat B."/>
            <person name="Herweijer M."/>
            <person name="van den Hombergh J.P.T.W."/>
            <person name="van den Hondel C.A.M.J.J."/>
            <person name="van der Heijden R.T.J.M."/>
            <person name="van der Kaaij R.M."/>
            <person name="Klis F.M."/>
            <person name="Kools H.J."/>
            <person name="Kubicek C.P."/>
            <person name="van Kuyk P.A."/>
            <person name="Lauber J."/>
            <person name="Lu X."/>
            <person name="van der Maarel M.J.E.C."/>
            <person name="Meulenberg R."/>
            <person name="Menke H."/>
            <person name="Mortimer M.A."/>
            <person name="Nielsen J."/>
            <person name="Oliver S.G."/>
            <person name="Olsthoorn M."/>
            <person name="Pal K."/>
            <person name="van Peij N.N.M.E."/>
            <person name="Ram A.F.J."/>
            <person name="Rinas U."/>
            <person name="Roubos J.A."/>
            <person name="Sagt C.M.J."/>
            <person name="Schmoll M."/>
            <person name="Sun J."/>
            <person name="Ussery D."/>
            <person name="Varga J."/>
            <person name="Vervecken W."/>
            <person name="van de Vondervoort P.J.J."/>
            <person name="Wedler H."/>
            <person name="Woesten H.A.B."/>
            <person name="Zeng A.-P."/>
            <person name="van Ooyen A.J.J."/>
            <person name="Visser J."/>
            <person name="Stam H."/>
        </authorList>
    </citation>
    <scope>NUCLEOTIDE SEQUENCE [LARGE SCALE GENOMIC DNA]</scope>
    <source>
        <strain>ATCC MYA-4892 / CBS 513.88 / FGSC A1513</strain>
    </source>
</reference>
<name>DML1_ASPNC</name>
<comment type="function">
    <text evidence="1">Involved in the partitioning of the mitochondrial organelle and mitochondrial DNA (mtDNA) inheritance.</text>
</comment>
<comment type="subcellular location">
    <subcellularLocation>
        <location evidence="1">Mitochondrion</location>
    </subcellularLocation>
</comment>
<comment type="similarity">
    <text evidence="2">Belongs to the misato family.</text>
</comment>
<gene>
    <name type="primary">dml1</name>
    <name type="ORF">An01g13230</name>
</gene>
<sequence length="487" mass="55478">MHEIITLQLGQRANYLATHFWNLQESYFTYNEEEESPVDHDVHFRPGVGADGSETYTPRTVIYDLKGGFGTLRKYNALYELTEDATPGQGLWDGREVLQQQAPIPQSDYQKSLDAGLPAPTLSAETVRYWSDYNRLFYHPRSIVQLNDYELNSKIMPFEDWTIGEELFNELDKEHDLLDRDVRPFAEECDQLRALQVFTGSDDAWGGFAAKYIDRIRDEYGKKSVWVWAIENGKKVDRQTQFKRDLNKARSVHAISTQASLYAPIIDPPSRIPQSIYLDARSEWYTSALVSAAMESVSLPTRLRPYHDFEASLAGDDGTHKIFELQSTMVQDGEDAANSPIKTEFDLDFTYDGLACKNSHHVFNQLQVSRGLADGGGESGGEDQGILRRKRHFNSEPMFQRFHTTLPFPILDSFPQNMFPELKSKEKINILAALTVSSRTAERLKVYETLAGRVAGVDERETLVNGLGEIRETYETGWMSDSDFDDD</sequence>